<keyword id="KW-0032">Aminotransferase</keyword>
<keyword id="KW-0663">Pyridoxal phosphate</keyword>
<keyword id="KW-0808">Transferase</keyword>
<reference key="1">
    <citation type="journal article" date="1998" name="Infect. Immun.">
        <title>Pathogenicity and immunogenicity of a Listeria monocytogenes strain that requires D-alanine for growth.</title>
        <authorList>
            <person name="Thompson R.J."/>
            <person name="Bouwer H.G.A."/>
            <person name="Portnoy D.A."/>
            <person name="Frankel F.R."/>
        </authorList>
    </citation>
    <scope>NUCLEOTIDE SEQUENCE [GENOMIC DNA]</scope>
    <source>
        <strain>10403S</strain>
    </source>
</reference>
<reference key="2">
    <citation type="submission" date="2010-04" db="EMBL/GenBank/DDBJ databases">
        <title>The genome sequence of Listeria monocytogenes strain 10403S.</title>
        <authorList>
            <consortium name="The Broad Institute Genome Sequencing Platform"/>
            <consortium name="The Broad Institute Genome Sequencing Center for Infectious Disease"/>
            <person name="Borowsky M."/>
            <person name="Borodovsky M."/>
            <person name="Young S.K."/>
            <person name="Zeng Q."/>
            <person name="Koehrsen M."/>
            <person name="Fitzgerald M."/>
            <person name="Wiedmann M."/>
            <person name="Swaminathan B."/>
            <person name="Lauer P."/>
            <person name="Portnoy D."/>
            <person name="Cossart P."/>
            <person name="Buchrieser C."/>
            <person name="Higgins D."/>
            <person name="Abouelleil A."/>
            <person name="Alvarado L."/>
            <person name="Arachchi H.M."/>
            <person name="Berlin A."/>
            <person name="Borenstein D."/>
            <person name="Brown A."/>
            <person name="Chapman S.B."/>
            <person name="Chen Z."/>
            <person name="Dunbar C.D."/>
            <person name="Engels R."/>
            <person name="Freedman E."/>
            <person name="Gearin G."/>
            <person name="Gellesch M."/>
            <person name="Goldberg J."/>
            <person name="Griggs A."/>
            <person name="Gujja S."/>
            <person name="Heilman E."/>
            <person name="Heiman D."/>
            <person name="Howarth C."/>
            <person name="Jen D."/>
            <person name="Larson L."/>
            <person name="Lui A."/>
            <person name="MacDonald J."/>
            <person name="Mehta T."/>
            <person name="Montmayeur A."/>
            <person name="Neiman D."/>
            <person name="Park D."/>
            <person name="Pearson M."/>
            <person name="Priest M."/>
            <person name="Richards J."/>
            <person name="Roberts A."/>
            <person name="Saif S."/>
            <person name="Shea T."/>
            <person name="Shenoy N."/>
            <person name="Sisk P."/>
            <person name="Stolte C."/>
            <person name="Sykes S."/>
            <person name="Walk T."/>
            <person name="White J."/>
            <person name="Yandava C."/>
            <person name="Haas B."/>
            <person name="Nusbaum C."/>
            <person name="Birren B."/>
        </authorList>
    </citation>
    <scope>NUCLEOTIDE SEQUENCE [LARGE SCALE GENOMIC DNA]</scope>
    <source>
        <strain>10403S</strain>
    </source>
</reference>
<accession>G2JZ74</accession>
<accession>O85046</accession>
<organism>
    <name type="scientific">Listeria monocytogenes serotype 1/2a (strain 10403S)</name>
    <dbReference type="NCBI Taxonomy" id="393133"/>
    <lineage>
        <taxon>Bacteria</taxon>
        <taxon>Bacillati</taxon>
        <taxon>Bacillota</taxon>
        <taxon>Bacilli</taxon>
        <taxon>Bacillales</taxon>
        <taxon>Listeriaceae</taxon>
        <taxon>Listeria</taxon>
    </lineage>
</organism>
<comment type="function">
    <text evidence="1">Acts on the D-isomers of alanine, leucine, aspartate, glutamate, aminobutyrate, norvaline and asparagine. The enzyme transfers an amino group from a substrate D-amino acid to the pyridoxal phosphate cofactor to form pyridoxamine and an alpha-keto acid in the first half-reaction. The second half-reaction is the reverse of the first, transferring the amino group from the pyridoxamine to a second alpha-keto acid to form the product D-amino acid via a ping-pong mechanism. This is an important process in the formation of D-alanine and D-glutamate, which are essential bacterial cell wall components (By similarity).</text>
</comment>
<comment type="catalytic activity">
    <reaction>
        <text>D-alanine + 2-oxoglutarate = D-glutamate + pyruvate</text>
        <dbReference type="Rhea" id="RHEA:15869"/>
        <dbReference type="ChEBI" id="CHEBI:15361"/>
        <dbReference type="ChEBI" id="CHEBI:16810"/>
        <dbReference type="ChEBI" id="CHEBI:29986"/>
        <dbReference type="ChEBI" id="CHEBI:57416"/>
        <dbReference type="EC" id="2.6.1.21"/>
    </reaction>
</comment>
<comment type="cofactor">
    <cofactor evidence="1">
        <name>pyridoxal 5'-phosphate</name>
        <dbReference type="ChEBI" id="CHEBI:597326"/>
    </cofactor>
</comment>
<comment type="subunit">
    <text evidence="1">Homodimer.</text>
</comment>
<comment type="similarity">
    <text evidence="3">Belongs to the class-IV pyridoxal-phosphate-dependent aminotransferase family.</text>
</comment>
<protein>
    <recommendedName>
        <fullName>D-alanine aminotransferase</fullName>
        <ecNumber>2.6.1.21</ecNumber>
    </recommendedName>
    <alternativeName>
        <fullName>D-amino acid aminotransferase</fullName>
    </alternativeName>
    <alternativeName>
        <fullName>D-amino acid transaminase</fullName>
        <shortName>DAAT</shortName>
    </alternativeName>
    <alternativeName>
        <fullName>D-aspartate aminotransferase</fullName>
    </alternativeName>
</protein>
<dbReference type="EC" id="2.6.1.21"/>
<dbReference type="EMBL" id="AF038439">
    <property type="protein sequence ID" value="AAC31363.1"/>
    <property type="molecule type" value="Genomic_DNA"/>
</dbReference>
<dbReference type="EMBL" id="CP002002">
    <property type="protein sequence ID" value="AEO06605.1"/>
    <property type="molecule type" value="Genomic_DNA"/>
</dbReference>
<dbReference type="RefSeq" id="WP_003732538.1">
    <property type="nucleotide sequence ID" value="NC_017544.1"/>
</dbReference>
<dbReference type="SMR" id="G2JZ74"/>
<dbReference type="KEGG" id="lmt:LMRG_01347"/>
<dbReference type="HOGENOM" id="CLU_020844_4_1_9"/>
<dbReference type="Proteomes" id="UP000001288">
    <property type="component" value="Chromosome"/>
</dbReference>
<dbReference type="GO" id="GO:0005829">
    <property type="term" value="C:cytosol"/>
    <property type="evidence" value="ECO:0007669"/>
    <property type="project" value="TreeGrafter"/>
</dbReference>
<dbReference type="GO" id="GO:0047810">
    <property type="term" value="F:D-alanine-2-oxoglutarate aminotransferase activity"/>
    <property type="evidence" value="ECO:0000250"/>
    <property type="project" value="UniProtKB"/>
</dbReference>
<dbReference type="GO" id="GO:0030170">
    <property type="term" value="F:pyridoxal phosphate binding"/>
    <property type="evidence" value="ECO:0000250"/>
    <property type="project" value="UniProtKB"/>
</dbReference>
<dbReference type="GO" id="GO:0046437">
    <property type="term" value="P:D-amino acid biosynthetic process"/>
    <property type="evidence" value="ECO:0000250"/>
    <property type="project" value="UniProtKB"/>
</dbReference>
<dbReference type="GO" id="GO:0019478">
    <property type="term" value="P:D-amino acid catabolic process"/>
    <property type="evidence" value="ECO:0000250"/>
    <property type="project" value="UniProtKB"/>
</dbReference>
<dbReference type="CDD" id="cd01558">
    <property type="entry name" value="D-AAT_like"/>
    <property type="match status" value="1"/>
</dbReference>
<dbReference type="FunFam" id="3.20.10.10:FF:000002">
    <property type="entry name" value="D-alanine aminotransferase"/>
    <property type="match status" value="1"/>
</dbReference>
<dbReference type="FunFam" id="3.30.470.10:FF:000009">
    <property type="entry name" value="D-alanine aminotransferase"/>
    <property type="match status" value="1"/>
</dbReference>
<dbReference type="Gene3D" id="3.30.470.10">
    <property type="match status" value="1"/>
</dbReference>
<dbReference type="Gene3D" id="3.20.10.10">
    <property type="entry name" value="D-amino Acid Aminotransferase, subunit A, domain 2"/>
    <property type="match status" value="1"/>
</dbReference>
<dbReference type="InterPro" id="IPR001544">
    <property type="entry name" value="Aminotrans_IV"/>
</dbReference>
<dbReference type="InterPro" id="IPR036038">
    <property type="entry name" value="Aminotransferase-like"/>
</dbReference>
<dbReference type="InterPro" id="IPR043132">
    <property type="entry name" value="BCAT-like_C"/>
</dbReference>
<dbReference type="InterPro" id="IPR043131">
    <property type="entry name" value="BCAT-like_N"/>
</dbReference>
<dbReference type="InterPro" id="IPR050571">
    <property type="entry name" value="Class-IV_PLP-Dep_Aminotrnsfr"/>
</dbReference>
<dbReference type="InterPro" id="IPR005784">
    <property type="entry name" value="D_amino_transT"/>
</dbReference>
<dbReference type="NCBIfam" id="TIGR01121">
    <property type="entry name" value="D_amino_aminoT"/>
    <property type="match status" value="1"/>
</dbReference>
<dbReference type="PANTHER" id="PTHR42743">
    <property type="entry name" value="AMINO-ACID AMINOTRANSFERASE"/>
    <property type="match status" value="1"/>
</dbReference>
<dbReference type="PANTHER" id="PTHR42743:SF10">
    <property type="entry name" value="D-ALANINE AMINOTRANSFERASE"/>
    <property type="match status" value="1"/>
</dbReference>
<dbReference type="Pfam" id="PF01063">
    <property type="entry name" value="Aminotran_4"/>
    <property type="match status" value="1"/>
</dbReference>
<dbReference type="SUPFAM" id="SSF56752">
    <property type="entry name" value="D-aminoacid aminotransferase-like PLP-dependent enzymes"/>
    <property type="match status" value="1"/>
</dbReference>
<proteinExistence type="inferred from homology"/>
<name>DAAA_LISM4</name>
<sequence>MKVLVNNHLVEREDATVDIEDRGYQFGDGVYEVVRLYNGKFFTYNEHIDRLYASAAKIDLVIPYSKEELRELLEKLVAENNINTGNVYLQVTRGVQNPRNHVIPDDFPLEGVLTAAAREVPRNERQFVEGGTAITEEDVRWLRCDIKSLNLLGNILAKNKAHQQNALEAILHRGEQVTECSASNVSIIKDGVLWTHAADNLILNGITRQVIIDVAKKNGIPVKEADFTLTDLREADEVFISSTTIEITPITHIDGVQVADGKRGPITAQLHQYFVEEITRACGELEFAK</sequence>
<gene>
    <name type="primary">dat</name>
    <name type="synonym">daaA</name>
    <name type="ordered locus">LMRG_01347</name>
</gene>
<feature type="chain" id="PRO_0000418518" description="D-alanine aminotransferase">
    <location>
        <begin position="1"/>
        <end position="289"/>
    </location>
</feature>
<feature type="binding site" evidence="2">
    <location>
        <position position="31"/>
    </location>
    <ligand>
        <name>substrate</name>
    </ligand>
</feature>
<feature type="binding site" evidence="2">
    <location>
        <position position="50"/>
    </location>
    <ligand>
        <name>pyridoxal 5'-phosphate</name>
        <dbReference type="ChEBI" id="CHEBI:597326"/>
    </ligand>
</feature>
<feature type="binding site" evidence="2">
    <location>
        <position position="99"/>
    </location>
    <ligand>
        <name>substrate</name>
    </ligand>
</feature>
<feature type="binding site" evidence="2">
    <location>
        <position position="101"/>
    </location>
    <ligand>
        <name>substrate</name>
    </ligand>
</feature>
<feature type="binding site" evidence="2">
    <location>
        <position position="179"/>
    </location>
    <ligand>
        <name>pyridoxal 5'-phosphate</name>
        <dbReference type="ChEBI" id="CHEBI:597326"/>
    </ligand>
</feature>
<feature type="modified residue" description="N6-(pyridoxal phosphate)lysine" evidence="2">
    <location>
        <position position="147"/>
    </location>
</feature>
<evidence type="ECO:0000250" key="1"/>
<evidence type="ECO:0000250" key="2">
    <source>
        <dbReference type="UniProtKB" id="P19938"/>
    </source>
</evidence>
<evidence type="ECO:0000305" key="3"/>